<reference key="1">
    <citation type="submission" date="2008-03" db="EMBL/GenBank/DDBJ databases">
        <title>Guizotia abyssinica chloroplast sequenced using Solexa.</title>
        <authorList>
            <person name="Kane N.C."/>
            <person name="Dempewolf H."/>
            <person name="Stewart M.L."/>
            <person name="Cronk Q."/>
            <person name="Rieseberrg L.H."/>
        </authorList>
    </citation>
    <scope>NUCLEOTIDE SEQUENCE [LARGE SCALE GENOMIC DNA]</scope>
    <source>
        <strain>cv. PI 508077</strain>
    </source>
</reference>
<keyword id="KW-0150">Chloroplast</keyword>
<keyword id="KW-0472">Membrane</keyword>
<keyword id="KW-0602">Photosynthesis</keyword>
<keyword id="KW-0604">Photosystem II</keyword>
<keyword id="KW-0934">Plastid</keyword>
<keyword id="KW-0674">Reaction center</keyword>
<keyword id="KW-0793">Thylakoid</keyword>
<keyword id="KW-0812">Transmembrane</keyword>
<keyword id="KW-1133">Transmembrane helix</keyword>
<dbReference type="EMBL" id="EU549769">
    <property type="protein sequence ID" value="ACB86542.1"/>
    <property type="molecule type" value="Genomic_DNA"/>
</dbReference>
<dbReference type="RefSeq" id="YP_001837375.1">
    <property type="nucleotide sequence ID" value="NC_010601.1"/>
</dbReference>
<dbReference type="SMR" id="B2LMK8"/>
<dbReference type="GeneID" id="6219207"/>
<dbReference type="GO" id="GO:0009535">
    <property type="term" value="C:chloroplast thylakoid membrane"/>
    <property type="evidence" value="ECO:0007669"/>
    <property type="project" value="UniProtKB-SubCell"/>
</dbReference>
<dbReference type="GO" id="GO:0009539">
    <property type="term" value="C:photosystem II reaction center"/>
    <property type="evidence" value="ECO:0007669"/>
    <property type="project" value="InterPro"/>
</dbReference>
<dbReference type="GO" id="GO:0015979">
    <property type="term" value="P:photosynthesis"/>
    <property type="evidence" value="ECO:0007669"/>
    <property type="project" value="UniProtKB-UniRule"/>
</dbReference>
<dbReference type="HAMAP" id="MF_01317">
    <property type="entry name" value="PSII_PsbL"/>
    <property type="match status" value="1"/>
</dbReference>
<dbReference type="InterPro" id="IPR003372">
    <property type="entry name" value="PSII_PsbL"/>
</dbReference>
<dbReference type="InterPro" id="IPR037266">
    <property type="entry name" value="PSII_PsbL_sf"/>
</dbReference>
<dbReference type="NCBIfam" id="NF001972">
    <property type="entry name" value="PRK00753.1"/>
    <property type="match status" value="1"/>
</dbReference>
<dbReference type="Pfam" id="PF02419">
    <property type="entry name" value="PsbL"/>
    <property type="match status" value="1"/>
</dbReference>
<dbReference type="SUPFAM" id="SSF161017">
    <property type="entry name" value="Photosystem II reaction center protein L, PsbL"/>
    <property type="match status" value="1"/>
</dbReference>
<feature type="chain" id="PRO_0000353257" description="Photosystem II reaction center protein L">
    <location>
        <begin position="1"/>
        <end position="38"/>
    </location>
</feature>
<feature type="transmembrane region" description="Helical" evidence="1">
    <location>
        <begin position="17"/>
        <end position="37"/>
    </location>
</feature>
<geneLocation type="chloroplast"/>
<proteinExistence type="inferred from homology"/>
<comment type="function">
    <text evidence="1">One of the components of the core complex of photosystem II (PSII). PSII is a light-driven water:plastoquinone oxidoreductase that uses light energy to abstract electrons from H(2)O, generating O(2) and a proton gradient subsequently used for ATP formation. It consists of a core antenna complex that captures photons, and an electron transfer chain that converts photonic excitation into a charge separation. This subunit is found at the monomer-monomer interface and is required for correct PSII assembly and/or dimerization.</text>
</comment>
<comment type="subunit">
    <text evidence="1">PSII is composed of 1 copy each of membrane proteins PsbA, PsbB, PsbC, PsbD, PsbE, PsbF, PsbH, PsbI, PsbJ, PsbK, PsbL, PsbM, PsbT, PsbX, PsbY, PsbZ, Psb30/Ycf12, at least 3 peripheral proteins of the oxygen-evolving complex and a large number of cofactors. It forms dimeric complexes.</text>
</comment>
<comment type="subcellular location">
    <subcellularLocation>
        <location evidence="1">Plastid</location>
        <location evidence="1">Chloroplast thylakoid membrane</location>
        <topology evidence="1">Single-pass membrane protein</topology>
    </subcellularLocation>
</comment>
<comment type="similarity">
    <text evidence="1">Belongs to the PsbL family.</text>
</comment>
<protein>
    <recommendedName>
        <fullName evidence="1">Photosystem II reaction center protein L</fullName>
        <shortName evidence="1">PSII-L</shortName>
    </recommendedName>
</protein>
<accession>B2LMK8</accession>
<evidence type="ECO:0000255" key="1">
    <source>
        <dbReference type="HAMAP-Rule" id="MF_01317"/>
    </source>
</evidence>
<sequence length="38" mass="4497">MTQSNPNEQNVELNRTSLYWGLLLIFVLAVLFSNYFFN</sequence>
<gene>
    <name evidence="1" type="primary">psbL</name>
    <name type="ordered locus">GuabCp036</name>
</gene>
<organism>
    <name type="scientific">Guizotia abyssinica</name>
    <name type="common">Niger</name>
    <name type="synonym">Ramtilla</name>
    <dbReference type="NCBI Taxonomy" id="4230"/>
    <lineage>
        <taxon>Eukaryota</taxon>
        <taxon>Viridiplantae</taxon>
        <taxon>Streptophyta</taxon>
        <taxon>Embryophyta</taxon>
        <taxon>Tracheophyta</taxon>
        <taxon>Spermatophyta</taxon>
        <taxon>Magnoliopsida</taxon>
        <taxon>eudicotyledons</taxon>
        <taxon>Gunneridae</taxon>
        <taxon>Pentapetalae</taxon>
        <taxon>asterids</taxon>
        <taxon>campanulids</taxon>
        <taxon>Asterales</taxon>
        <taxon>Asteraceae</taxon>
        <taxon>Asteroideae</taxon>
        <taxon>Heliantheae alliance</taxon>
        <taxon>Millerieae</taxon>
        <taxon>Guizotia</taxon>
    </lineage>
</organism>
<name>PSBL_GUIAB</name>